<accession>Q2HDE7</accession>
<comment type="function">
    <text evidence="1">Component of the ERMES/MDM complex, which serves as a molecular tether to connect the endoplasmic reticulum (ER) and mitochondria. Components of this complex are involved in the control of mitochondrial shape and protein biogenesis, and function in nonvesicular lipid trafficking between the ER and mitochondria. MDM12 is required for the interaction of the ER-resident membrane protein MMM1 and the outer mitochondrial membrane-resident beta-barrel protein MDM10. The MDM12-MMM1 subcomplex functions in the major beta-barrel assembly pathway that is responsible for biogenesis of all mitochondrial outer membrane beta-barrel proteins, and acts in a late step after the SAM complex. The MDM10-MDM12-MMM1 subcomplex further acts in the TOM40-specific pathway after the action of the MDM12-MMM1 complex. Essential for establishing and maintaining the structure of mitochondria and maintenance of mtDNA nucleoids.</text>
</comment>
<comment type="subunit">
    <text evidence="1">Component of the ER-mitochondria encounter structure (ERMES) or MDM complex, composed of MMM1, MDM10, MDM12 and MDM34. A MMM1 homodimer associates with one molecule of MDM12 on each side in a pairwise head-to-tail manner, and the SMP-LTD domains of MMM1 and MDM12 generate a continuous hydrophobic tunnel for phospholipid trafficking.</text>
</comment>
<comment type="subcellular location">
    <subcellularLocation>
        <location evidence="1">Mitochondrion outer membrane</location>
        <topology evidence="1">Peripheral membrane protein</topology>
        <orientation evidence="1">Cytoplasmic side</orientation>
    </subcellularLocation>
    <subcellularLocation>
        <location evidence="1">Endoplasmic reticulum membrane</location>
        <topology evidence="1">Peripheral membrane protein</topology>
        <orientation evidence="1">Cytoplasmic side</orientation>
    </subcellularLocation>
    <text evidence="1">The ERMES/MDM complex localizes to a few discrete foci (around 10 per single cell), that represent mitochondria-endoplasmic reticulum junctions. These foci are often found next to mtDNA nucleoids.</text>
</comment>
<comment type="domain">
    <text evidence="1">The SMP-LTD domain is a barrel-like domain that can bind various types of glycerophospholipids in its interior and mediate their transfer between two adjacent bilayers.</text>
</comment>
<comment type="similarity">
    <text evidence="1">Belongs to the MDM12 family.</text>
</comment>
<comment type="sequence caution" evidence="3">
    <conflict type="erroneous gene model prediction">
        <sequence resource="EMBL-CDS" id="EAQ93522"/>
    </conflict>
</comment>
<keyword id="KW-0256">Endoplasmic reticulum</keyword>
<keyword id="KW-0445">Lipid transport</keyword>
<keyword id="KW-0446">Lipid-binding</keyword>
<keyword id="KW-0472">Membrane</keyword>
<keyword id="KW-0496">Mitochondrion</keyword>
<keyword id="KW-1000">Mitochondrion outer membrane</keyword>
<keyword id="KW-1185">Reference proteome</keyword>
<keyword id="KW-0813">Transport</keyword>
<protein>
    <recommendedName>
        <fullName evidence="1">Mitochondrial distribution and morphology protein 12</fullName>
    </recommendedName>
    <alternativeName>
        <fullName evidence="1">Mitochondrial inheritance component MDM12</fullName>
    </alternativeName>
</protein>
<gene>
    <name evidence="1" type="primary">MDM12</name>
    <name type="ORF">CHGG_01757</name>
</gene>
<proteinExistence type="inferred from homology"/>
<organism>
    <name type="scientific">Chaetomium globosum (strain ATCC 6205 / CBS 148.51 / DSM 1962 / NBRC 6347 / NRRL 1970)</name>
    <name type="common">Soil fungus</name>
    <dbReference type="NCBI Taxonomy" id="306901"/>
    <lineage>
        <taxon>Eukaryota</taxon>
        <taxon>Fungi</taxon>
        <taxon>Dikarya</taxon>
        <taxon>Ascomycota</taxon>
        <taxon>Pezizomycotina</taxon>
        <taxon>Sordariomycetes</taxon>
        <taxon>Sordariomycetidae</taxon>
        <taxon>Sordariales</taxon>
        <taxon>Chaetomiaceae</taxon>
        <taxon>Chaetomium</taxon>
    </lineage>
</organism>
<evidence type="ECO:0000255" key="1">
    <source>
        <dbReference type="HAMAP-Rule" id="MF_03104"/>
    </source>
</evidence>
<evidence type="ECO:0000256" key="2">
    <source>
        <dbReference type="SAM" id="MobiDB-lite"/>
    </source>
</evidence>
<evidence type="ECO:0000305" key="3"/>
<feature type="chain" id="PRO_0000384281" description="Mitochondrial distribution and morphology protein 12">
    <location>
        <begin position="1"/>
        <end position="492"/>
    </location>
</feature>
<feature type="domain" description="SMP-LTD" evidence="1">
    <location>
        <begin position="1"/>
        <end position="492"/>
    </location>
</feature>
<feature type="region of interest" description="Disordered" evidence="2">
    <location>
        <begin position="68"/>
        <end position="158"/>
    </location>
</feature>
<feature type="region of interest" description="Disordered" evidence="2">
    <location>
        <begin position="199"/>
        <end position="301"/>
    </location>
</feature>
<feature type="region of interest" description="Disordered" evidence="2">
    <location>
        <begin position="379"/>
        <end position="434"/>
    </location>
</feature>
<feature type="compositionally biased region" description="Acidic residues" evidence="2">
    <location>
        <begin position="78"/>
        <end position="90"/>
    </location>
</feature>
<feature type="compositionally biased region" description="Gly residues" evidence="2">
    <location>
        <begin position="130"/>
        <end position="139"/>
    </location>
</feature>
<feature type="compositionally biased region" description="Low complexity" evidence="2">
    <location>
        <begin position="246"/>
        <end position="257"/>
    </location>
</feature>
<feature type="compositionally biased region" description="Polar residues" evidence="2">
    <location>
        <begin position="270"/>
        <end position="285"/>
    </location>
</feature>
<feature type="compositionally biased region" description="Low complexity" evidence="2">
    <location>
        <begin position="387"/>
        <end position="400"/>
    </location>
</feature>
<feature type="compositionally biased region" description="Gly residues" evidence="2">
    <location>
        <begin position="401"/>
        <end position="415"/>
    </location>
</feature>
<feature type="compositionally biased region" description="Low complexity" evidence="2">
    <location>
        <begin position="416"/>
        <end position="428"/>
    </location>
</feature>
<reference key="1">
    <citation type="journal article" date="2015" name="Genome Announc.">
        <title>Draft genome sequence of the cellulolytic fungus Chaetomium globosum.</title>
        <authorList>
            <person name="Cuomo C.A."/>
            <person name="Untereiner W.A."/>
            <person name="Ma L.-J."/>
            <person name="Grabherr M."/>
            <person name="Birren B.W."/>
        </authorList>
    </citation>
    <scope>NUCLEOTIDE SEQUENCE [LARGE SCALE GENOMIC DNA]</scope>
    <source>
        <strain>ATCC 6205 / CBS 148.51 / DSM 1962 / NBRC 6347 / NRRL 1970</strain>
    </source>
</reference>
<name>MDM12_CHAGB</name>
<sequence length="492" mass="52620">MSIDLNWETVTGGPDGQELADQIRDFIHTKFQSVPLPRFIKSVTVHDFQFGVIPPELELKDITDPLPDFYEDHVDSDVASDDSEGEEDAVDNNLAPPSQGERHQRTDDSEALGGDVRNLGHLPPHLMFGSPGGPGGPGMGSLRNGDMGSPFMRVSTPGIPGGTSNLHYFHSHLGGGLSGTQTPLAAVAGAQHLSTANWLEGHGHSSSVPNLTHFGNPGGAGTSPRRQPERNHSRNPSQGSISVADLNPNSLAPPSSSTLGVPSLKEKHSTTPAPGSATALSGSNEQQQQQQPQDNDDGHPRWREQRIDDMQAVFRIRYAGDVKLLLTADILLDYPMPSFVGIPVRLSITGLTFDGVGVLAKIRKRVHFCFLSPEDAAAAVGGDGEEGLSSPGEGPSQAQGQGQGQGQGQGQGQTPGAGQQKQQKKQAGWVGSGNTKLGGLLQEIRVESEIGQRESGRQSLKNVGKVERFVLEQVRRIFEEEFVYPSFWTFLV</sequence>
<dbReference type="EMBL" id="CH408029">
    <property type="protein sequence ID" value="EAQ93522.1"/>
    <property type="status" value="ALT_SEQ"/>
    <property type="molecule type" value="Genomic_DNA"/>
</dbReference>
<dbReference type="RefSeq" id="XP_001220978.1">
    <property type="nucleotide sequence ID" value="XM_001220977.1"/>
</dbReference>
<dbReference type="FunCoup" id="Q2HDE7">
    <property type="interactions" value="40"/>
</dbReference>
<dbReference type="STRING" id="306901.Q2HDE7"/>
<dbReference type="GeneID" id="4386894"/>
<dbReference type="VEuPathDB" id="FungiDB:CHGG_01757"/>
<dbReference type="eggNOG" id="ENOG502S3PB">
    <property type="taxonomic scope" value="Eukaryota"/>
</dbReference>
<dbReference type="HOGENOM" id="CLU_026794_0_0_1"/>
<dbReference type="InParanoid" id="Q2HDE7"/>
<dbReference type="OrthoDB" id="3356905at2759"/>
<dbReference type="Proteomes" id="UP000001056">
    <property type="component" value="Unassembled WGS sequence"/>
</dbReference>
<dbReference type="GO" id="GO:0005789">
    <property type="term" value="C:endoplasmic reticulum membrane"/>
    <property type="evidence" value="ECO:0007669"/>
    <property type="project" value="UniProtKB-SubCell"/>
</dbReference>
<dbReference type="GO" id="GO:0032865">
    <property type="term" value="C:ERMES complex"/>
    <property type="evidence" value="ECO:0007669"/>
    <property type="project" value="UniProtKB-UniRule"/>
</dbReference>
<dbReference type="GO" id="GO:0008289">
    <property type="term" value="F:lipid binding"/>
    <property type="evidence" value="ECO:0007669"/>
    <property type="project" value="UniProtKB-KW"/>
</dbReference>
<dbReference type="GO" id="GO:0000002">
    <property type="term" value="P:mitochondrial genome maintenance"/>
    <property type="evidence" value="ECO:0007669"/>
    <property type="project" value="UniProtKB-UniRule"/>
</dbReference>
<dbReference type="GO" id="GO:1990456">
    <property type="term" value="P:mitochondrion-endoplasmic reticulum membrane tethering"/>
    <property type="evidence" value="ECO:0007669"/>
    <property type="project" value="TreeGrafter"/>
</dbReference>
<dbReference type="GO" id="GO:0015914">
    <property type="term" value="P:phospholipid transport"/>
    <property type="evidence" value="ECO:0007669"/>
    <property type="project" value="TreeGrafter"/>
</dbReference>
<dbReference type="GO" id="GO:0045040">
    <property type="term" value="P:protein insertion into mitochondrial outer membrane"/>
    <property type="evidence" value="ECO:0007669"/>
    <property type="project" value="UniProtKB-UniRule"/>
</dbReference>
<dbReference type="CDD" id="cd21672">
    <property type="entry name" value="SMP_Mdm12"/>
    <property type="match status" value="1"/>
</dbReference>
<dbReference type="HAMAP" id="MF_03104">
    <property type="entry name" value="Mdm12"/>
    <property type="match status" value="1"/>
</dbReference>
<dbReference type="InterPro" id="IPR027532">
    <property type="entry name" value="Mdm12"/>
</dbReference>
<dbReference type="InterPro" id="IPR031468">
    <property type="entry name" value="SMP_LBD"/>
</dbReference>
<dbReference type="PANTHER" id="PTHR28204">
    <property type="entry name" value="MITOCHONDRIAL DISTRIBUTION AND MORPHOLOGY PROTEIN 12"/>
    <property type="match status" value="1"/>
</dbReference>
<dbReference type="PANTHER" id="PTHR28204:SF1">
    <property type="entry name" value="MITOCHONDRIAL DISTRIBUTION AND MORPHOLOGY PROTEIN 12"/>
    <property type="match status" value="1"/>
</dbReference>
<dbReference type="PROSITE" id="PS51847">
    <property type="entry name" value="SMP"/>
    <property type="match status" value="1"/>
</dbReference>